<proteinExistence type="evidence at protein level"/>
<feature type="chain" id="PRO_0000071743" description="V-type proton ATPase 16 kDa proteolipid subunit c">
    <location>
        <begin position="1"/>
        <end position="155"/>
    </location>
</feature>
<feature type="topological domain" description="Lumenal" evidence="4">
    <location>
        <begin position="1"/>
        <end position="10"/>
    </location>
</feature>
<feature type="transmembrane region" description="Helical" evidence="4">
    <location>
        <begin position="11"/>
        <end position="33"/>
    </location>
</feature>
<feature type="topological domain" description="Cytoplasmic" evidence="4">
    <location>
        <begin position="34"/>
        <end position="55"/>
    </location>
</feature>
<feature type="transmembrane region" description="Helical" evidence="4">
    <location>
        <begin position="56"/>
        <end position="76"/>
    </location>
</feature>
<feature type="topological domain" description="Lumenal" evidence="4">
    <location>
        <begin position="77"/>
        <end position="92"/>
    </location>
</feature>
<feature type="transmembrane region" description="Helical" evidence="4">
    <location>
        <begin position="93"/>
        <end position="114"/>
    </location>
</feature>
<feature type="topological domain" description="Cytoplasmic" evidence="4">
    <location>
        <begin position="115"/>
        <end position="131"/>
    </location>
</feature>
<feature type="transmembrane region" description="Helical" evidence="4">
    <location>
        <begin position="132"/>
        <end position="152"/>
    </location>
</feature>
<feature type="topological domain" description="Lumenal" evidence="4">
    <location>
        <begin position="153"/>
        <end position="155"/>
    </location>
</feature>
<feature type="site" description="Essential for proton translocation" evidence="10">
    <location>
        <position position="139"/>
    </location>
</feature>
<feature type="sequence variant" id="VAR_088818" description="In EPEO3; uncertain significance." evidence="9">
    <original>A</original>
    <variation>T</variation>
    <location>
        <position position="22"/>
    </location>
</feature>
<feature type="sequence variant" id="VAR_088819" description="In EPEO3; uncertain significance; decreased function in proton transmembrane transport." evidence="10">
    <original>G</original>
    <variation>S</variation>
    <location>
        <position position="29"/>
    </location>
</feature>
<feature type="sequence variant" id="VAR_088820" description="In EPEO3; likely pathogenic; decreased function in proton transmembrane transport." evidence="10">
    <original>R</original>
    <variation>P</variation>
    <location>
        <position position="48"/>
    </location>
</feature>
<feature type="sequence variant" id="VAR_088821" description="Sligthly decreased function in proton transmembrane transport; dbSNP:rs770613842." evidence="10">
    <original>R</original>
    <variation>W</variation>
    <location>
        <position position="48"/>
    </location>
</feature>
<feature type="sequence variant" id="VAR_088822" description="In EPEO3; uncertain significance." evidence="10">
    <original>M</original>
    <variation>R</variation>
    <location>
        <position position="53"/>
    </location>
</feature>
<feature type="sequence variant" id="VAR_088823" description="In EPEO3; uncertain significance; dbSNP:rs2065895527." evidence="10">
    <original>P</original>
    <variation>A</variation>
    <location>
        <position position="58"/>
    </location>
</feature>
<feature type="sequence variant" id="VAR_088824" description="In EPEO3; uncertain significance; sligthly decreased function in proton transmembrane transport." evidence="10">
    <original>G</original>
    <variation>A</variation>
    <location>
        <position position="63"/>
    </location>
</feature>
<feature type="sequence variant" id="VAR_088825" description="In EPEO3; uncertain significance; decreased function in proton transmembrane transport." evidence="10">
    <original>V</original>
    <variation>F</variation>
    <location>
        <position position="74"/>
    </location>
</feature>
<feature type="sequence variant" id="VAR_088826" description="In EPEO3; likely pathogenic; loss of function in proton transmembrane transport." evidence="10">
    <original>A</original>
    <variation>P</variation>
    <location>
        <position position="95"/>
    </location>
</feature>
<feature type="sequence variant" id="VAR_088827" description="In EPEO3; likely pathogenic; decreased function in proton transmembrane transport." evidence="10">
    <original>A</original>
    <variation>T</variation>
    <location>
        <position position="95"/>
    </location>
</feature>
<feature type="sequence variant" id="VAR_088828" description="In EPEO3; likely pathogenic." evidence="10">
    <original>A</original>
    <variation>V</variation>
    <location>
        <position position="95"/>
    </location>
</feature>
<feature type="sequence variant" id="VAR_088829" description="In EPEO3; uncertain significance; severely decreased function in proton transmembrane transport." evidence="10">
    <original>S</original>
    <variation>R</variation>
    <location>
        <position position="98"/>
    </location>
</feature>
<feature type="sequence variant" id="VAR_088830" description="In EPEO3; uncertain significance." evidence="11">
    <location>
        <begin position="99"/>
        <end position="102"/>
    </location>
</feature>
<feature type="sequence variant" id="VAR_088831" description="Sligthly decreased function in proton transmembrane transport; dbSNP:rs754740949." evidence="10">
    <original>G</original>
    <variation>S</variation>
    <location>
        <position position="103"/>
    </location>
</feature>
<feature type="sequence variant" id="VAR_088832" description="In EPEO3; uncertain significance." evidence="11">
    <original>R</original>
    <variation>W</variation>
    <location>
        <position position="119"/>
    </location>
</feature>
<feature type="sequence variant" id="VAR_088833" description="Sligthly decreased function in proton transmembrane transport; dbSNP:rs1490539690." evidence="10">
    <original>M</original>
    <variation>I</variation>
    <location>
        <position position="131"/>
    </location>
</feature>
<feature type="sequence variant" id="VAR_088834" description="In EPEO3; uncertain significance." evidence="10">
    <original>I</original>
    <variation>N</variation>
    <location>
        <position position="132"/>
    </location>
</feature>
<feature type="sequence variant" id="VAR_088835" description="In EPEO3; uncertain significance; unaffected function in proton transmembrane transport." evidence="10">
    <original>F</original>
    <variation>L</variation>
    <location>
        <position position="137"/>
    </location>
</feature>
<feature type="sequence variant" id="VAR_088836" description="In EPEO3; likely pathogenic; decreased function in proton transmembrane transport; dbSNP:rs2065898758." evidence="10">
    <original>A</original>
    <variation>P</variation>
    <location>
        <position position="138"/>
    </location>
</feature>
<feature type="sequence variant" id="VAR_088837" description="In EPEO3; uncertain significance." evidence="10">
    <original>G</original>
    <variation>D</variation>
    <location>
        <position position="142"/>
    </location>
</feature>
<feature type="sequence variant" id="VAR_088838" description="In EPEO3; uncertain significance." evidence="10">
    <original>I</original>
    <variation>T</variation>
    <location>
        <position position="147"/>
    </location>
</feature>
<feature type="sequence variant" id="VAR_088839" description="In EPEO3; likely pathogenic; severely decreased function in proton transmembrane transport." evidence="10">
    <original>A</original>
    <variation>T</variation>
    <location>
        <position position="149"/>
    </location>
</feature>
<feature type="sequence variant" id="VAR_088840" description="In EPEO3; likely pathogenic; sligthly decreased function in proton transmembrane transport." evidence="10">
    <original>L</original>
    <variation>F</variation>
    <location>
        <position position="150"/>
    </location>
</feature>
<feature type="sequence variant" id="VAR_088841" description="In EPEO3; likely pathogenic; severely decreased function in proton transmembrane transport." evidence="10">
    <original>L</original>
    <variation>P</variation>
    <location>
        <position position="150"/>
    </location>
</feature>
<feature type="mutagenesis site" description="Severely decreased proton transmembrane transport." evidence="10">
    <original>E</original>
    <variation>A</variation>
    <location>
        <position position="139"/>
    </location>
</feature>
<feature type="helix" evidence="18">
    <location>
        <begin position="9"/>
        <end position="12"/>
    </location>
</feature>
<feature type="helix" evidence="18">
    <location>
        <begin position="13"/>
        <end position="45"/>
    </location>
</feature>
<feature type="helix" evidence="18">
    <location>
        <begin position="49"/>
        <end position="51"/>
    </location>
</feature>
<feature type="helix" evidence="18">
    <location>
        <begin position="54"/>
        <end position="56"/>
    </location>
</feature>
<feature type="helix" evidence="18">
    <location>
        <begin position="57"/>
        <end position="76"/>
    </location>
</feature>
<feature type="helix" evidence="18">
    <location>
        <begin position="86"/>
        <end position="123"/>
    </location>
</feature>
<feature type="helix" evidence="18">
    <location>
        <begin position="125"/>
        <end position="127"/>
    </location>
</feature>
<feature type="helix" evidence="18">
    <location>
        <begin position="128"/>
        <end position="137"/>
    </location>
</feature>
<feature type="helix" evidence="18">
    <location>
        <begin position="140"/>
        <end position="152"/>
    </location>
</feature>
<accession>P27449</accession>
<accession>Q6FH26</accession>
<gene>
    <name type="primary">ATP6V0C</name>
    <name type="synonym">ATP6C</name>
    <name type="synonym">ATP6L</name>
    <name type="synonym">ATPL</name>
</gene>
<organism>
    <name type="scientific">Homo sapiens</name>
    <name type="common">Human</name>
    <dbReference type="NCBI Taxonomy" id="9606"/>
    <lineage>
        <taxon>Eukaryota</taxon>
        <taxon>Metazoa</taxon>
        <taxon>Chordata</taxon>
        <taxon>Craniata</taxon>
        <taxon>Vertebrata</taxon>
        <taxon>Euteleostomi</taxon>
        <taxon>Mammalia</taxon>
        <taxon>Eutheria</taxon>
        <taxon>Euarchontoglires</taxon>
        <taxon>Primates</taxon>
        <taxon>Haplorrhini</taxon>
        <taxon>Catarrhini</taxon>
        <taxon>Hominidae</taxon>
        <taxon>Homo</taxon>
    </lineage>
</organism>
<evidence type="ECO:0000250" key="1">
    <source>
        <dbReference type="UniProtKB" id="P23956"/>
    </source>
</evidence>
<evidence type="ECO:0000250" key="2">
    <source>
        <dbReference type="UniProtKB" id="P63081"/>
    </source>
</evidence>
<evidence type="ECO:0000250" key="3">
    <source>
        <dbReference type="UniProtKB" id="P63082"/>
    </source>
</evidence>
<evidence type="ECO:0000255" key="4"/>
<evidence type="ECO:0000269" key="5">
    <source>
    </source>
</evidence>
<evidence type="ECO:0000269" key="6">
    <source>
    </source>
</evidence>
<evidence type="ECO:0000269" key="7">
    <source>
    </source>
</evidence>
<evidence type="ECO:0000269" key="8">
    <source>
    </source>
</evidence>
<evidence type="ECO:0000269" key="9">
    <source>
    </source>
</evidence>
<evidence type="ECO:0000269" key="10">
    <source>
    </source>
</evidence>
<evidence type="ECO:0000269" key="11">
    <source>
    </source>
</evidence>
<evidence type="ECO:0000269" key="12">
    <source>
    </source>
</evidence>
<evidence type="ECO:0000305" key="13"/>
<evidence type="ECO:0007744" key="14">
    <source>
        <dbReference type="PDB" id="6WLW"/>
    </source>
</evidence>
<evidence type="ECO:0007744" key="15">
    <source>
        <dbReference type="PDB" id="6WM2"/>
    </source>
</evidence>
<evidence type="ECO:0007744" key="16">
    <source>
        <dbReference type="PDB" id="6WM3"/>
    </source>
</evidence>
<evidence type="ECO:0007744" key="17">
    <source>
        <dbReference type="PDB" id="6WM4"/>
    </source>
</evidence>
<evidence type="ECO:0007829" key="18">
    <source>
        <dbReference type="PDB" id="6WLW"/>
    </source>
</evidence>
<reference key="1">
    <citation type="journal article" date="1991" name="Proc. Natl. Acad. Sci. U.S.A.">
        <title>CpG island in the region of an autosomal dominant polycystic kidney disease locus defines the 5' end of a gene encoding a putative proton channel.</title>
        <authorList>
            <person name="Gillespie G.A.J."/>
            <person name="Somlo S."/>
            <person name="Germino G.G."/>
            <person name="Weinstat-Saslow D."/>
            <person name="Reeders S.T."/>
        </authorList>
    </citation>
    <scope>NUCLEOTIDE SEQUENCE [MRNA]</scope>
</reference>
<reference key="2">
    <citation type="submission" date="2004-06" db="EMBL/GenBank/DDBJ databases">
        <title>Cloning of human full open reading frames in Gateway(TM) system entry vector (pDONR201).</title>
        <authorList>
            <person name="Ebert L."/>
            <person name="Schick M."/>
            <person name="Neubert P."/>
            <person name="Schatten R."/>
            <person name="Henze S."/>
            <person name="Korn B."/>
        </authorList>
    </citation>
    <scope>NUCLEOTIDE SEQUENCE [LARGE SCALE MRNA]</scope>
</reference>
<reference key="3">
    <citation type="submission" date="2004-10" db="EMBL/GenBank/DDBJ databases">
        <title>Cloning of human full-length CDSs in BD Creator(TM) system donor vector.</title>
        <authorList>
            <person name="Kalnine N."/>
            <person name="Chen X."/>
            <person name="Rolfs A."/>
            <person name="Halleck A."/>
            <person name="Hines L."/>
            <person name="Eisenstein S."/>
            <person name="Koundinya M."/>
            <person name="Raphael J."/>
            <person name="Moreira D."/>
            <person name="Kelley T."/>
            <person name="LaBaer J."/>
            <person name="Lin Y."/>
            <person name="Phelan M."/>
            <person name="Farmer A."/>
        </authorList>
    </citation>
    <scope>NUCLEOTIDE SEQUENCE [LARGE SCALE MRNA]</scope>
</reference>
<reference key="4">
    <citation type="journal article" date="2004" name="Genome Res.">
        <title>The status, quality, and expansion of the NIH full-length cDNA project: the Mammalian Gene Collection (MGC).</title>
        <authorList>
            <consortium name="The MGC Project Team"/>
        </authorList>
    </citation>
    <scope>NUCLEOTIDE SEQUENCE [LARGE SCALE MRNA]</scope>
    <source>
        <tissue>Brain</tissue>
        <tissue>Muscle</tissue>
        <tissue>Skin</tissue>
    </source>
</reference>
<reference key="5">
    <citation type="journal article" date="1992" name="Biochem. Biophys. Res. Commun.">
        <title>Vacuolar type H(+)-ATPase genes: presence of four genes including pseudogenes for the 16-kDa proteolipid subunit in the human genome.</title>
        <authorList>
            <person name="Hasebe M."/>
            <person name="Hanada H."/>
            <person name="Moriyama Y."/>
            <person name="Maeda M."/>
            <person name="Futai M."/>
        </authorList>
    </citation>
    <scope>NUCLEOTIDE SEQUENCE [MRNA] OF 28-155</scope>
</reference>
<reference key="6">
    <citation type="journal article" date="1995" name="J. Gen. Virol.">
        <title>Mapping of the intermolecular association of human T cell leukaemia/lymphotropic virus type I p12I and the vacuolar H+-ATPase 16 kDa subunit protein.</title>
        <authorList>
            <person name="Koralnik I.J."/>
            <person name="Mulloy J.C."/>
            <person name="Andresson T."/>
            <person name="Fullen J."/>
            <person name="Franchini G."/>
        </authorList>
    </citation>
    <scope>INTERACTION WITH HTLV-1 ACCESSORY PROTEIN P12I (MICROBIAL INFECTION)</scope>
</reference>
<reference key="7">
    <citation type="journal article" date="2001" name="Genomics">
        <title>Cloning, mapping, and characterization of a human homologue of the yeast longevity assurance gene LAG1.</title>
        <authorList>
            <person name="Pan H."/>
            <person name="Qin W.-X."/>
            <person name="Huo K.-K."/>
            <person name="Wan D.-F."/>
            <person name="Yu Y."/>
            <person name="Xu Z.-G."/>
            <person name="Hu Q.-D."/>
            <person name="Gu K.T."/>
            <person name="Zhou X.-M."/>
            <person name="Jiang H.-Q."/>
            <person name="Zhang P.-P."/>
            <person name="Huang Y."/>
            <person name="Li Y.-Y."/>
            <person name="Gu J.-R."/>
        </authorList>
    </citation>
    <scope>INTERACTION WITH LASS2</scope>
</reference>
<reference key="8">
    <citation type="journal article" date="2008" name="Mol. Neurodegener.">
        <title>A novel brain-enriched E3 ubiquitin ligase RNF182 is up regulated in the brains of Alzheimer's patients and targets ATP6V0C for degradation.</title>
        <authorList>
            <person name="Liu Q.Y."/>
            <person name="Lei J.X."/>
            <person name="Sikorska M."/>
            <person name="Liu R."/>
        </authorList>
    </citation>
    <scope>INTERACTION WITH RNF182</scope>
    <scope>UBIQUITINATION</scope>
</reference>
<reference key="9">
    <citation type="journal article" date="2011" name="BMC Syst. Biol.">
        <title>Initial characterization of the human central proteome.</title>
        <authorList>
            <person name="Burkard T.R."/>
            <person name="Planyavsky M."/>
            <person name="Kaupe I."/>
            <person name="Breitwieser F.P."/>
            <person name="Buerckstuemmer T."/>
            <person name="Bennett K.L."/>
            <person name="Superti-Furga G."/>
            <person name="Colinge J."/>
        </authorList>
    </citation>
    <scope>IDENTIFICATION BY MASS SPECTROMETRY [LARGE SCALE ANALYSIS]</scope>
</reference>
<reference key="10">
    <citation type="journal article" date="2015" name="Proteomics">
        <title>N-terminome analysis of the human mitochondrial proteome.</title>
        <authorList>
            <person name="Vaca Jacome A.S."/>
            <person name="Rabilloud T."/>
            <person name="Schaeffer-Reiss C."/>
            <person name="Rompais M."/>
            <person name="Ayoub D."/>
            <person name="Lane L."/>
            <person name="Bairoch A."/>
            <person name="Van Dorsselaer A."/>
            <person name="Carapito C."/>
        </authorList>
    </citation>
    <scope>IDENTIFICATION BY MASS SPECTROMETRY [LARGE SCALE ANALYSIS]</scope>
</reference>
<reference key="11">
    <citation type="journal article" date="2021" name="Brain Dev.">
        <title>Novel de novo mutation substantiates ATP6V0C as a gene causing epilepsy with intellectual disability.</title>
        <authorList>
            <person name="Ittiwut C."/>
            <person name="Poonmaksatit S."/>
            <person name="Boonsimma P."/>
            <person name="Desudchit T."/>
            <person name="Suphapeetiporn K."/>
            <person name="Ittiwut R."/>
            <person name="Shotelersuk V."/>
        </authorList>
    </citation>
    <scope>INVOLVEMENT IN EPEO3</scope>
</reference>
<reference evidence="14 15 16 17" key="12">
    <citation type="journal article" date="2020" name="Mol. Cell">
        <title>Structures of a Complete Human V-ATPase Reveal Mechanisms of Its Assembly.</title>
        <authorList>
            <person name="Wang L."/>
            <person name="Wu D."/>
            <person name="Robinson C.V."/>
            <person name="Wu H."/>
            <person name="Fu T.M."/>
        </authorList>
    </citation>
    <scope>STRUCTURE BY ELECTRON MICROSCOPY (3.00 ANGSTROMS)</scope>
    <scope>FUNCTION</scope>
    <scope>IDENTIFICATION IN THE V-ATPASE COMPLEX</scope>
</reference>
<reference key="13">
    <citation type="journal article" date="2022" name="Front. Mol. Neurosci.">
        <title>ATP6V0C Is Associated With Febrile Seizures and Epilepsy With Febrile Seizures Plus.</title>
        <authorList>
            <person name="Tian Y."/>
            <person name="Zhai Q.X."/>
            <person name="Li X.J."/>
            <person name="Shi Z."/>
            <person name="Cheng C.F."/>
            <person name="Fan C.X."/>
            <person name="Tang B."/>
            <person name="Zhang Y."/>
            <person name="He Y.Y."/>
            <person name="Li W.B."/>
            <person name="Luo S."/>
            <person name="Hou C."/>
            <person name="Chen W.X."/>
            <person name="Liao W.P."/>
            <person name="Wang J."/>
        </authorList>
    </citation>
    <scope>VARIANT EPEO3 THR-22</scope>
    <scope>INVOLVEMENT IN EPEO3</scope>
</reference>
<reference key="14">
    <citation type="journal article" date="2023" name="Brain">
        <title>ATP6V0C variants impair V-ATPase function causing a neurodevelopmental disorder often associated with epilepsy.</title>
        <authorList>
            <consortium name="Genomics England Research Consortium"/>
            <person name="Mattison K.A."/>
            <person name="Tossing G."/>
            <person name="Mulroe F."/>
            <person name="Simmons C."/>
            <person name="Butler K.M."/>
            <person name="Schreiber A."/>
            <person name="Alsadah A."/>
            <person name="Neilson D.E."/>
            <person name="Naess K."/>
            <person name="Wedell A."/>
            <person name="Wredenberg A."/>
            <person name="Sorlin A."/>
            <person name="McCann E."/>
            <person name="Burghel G.J."/>
            <person name="Menendez B."/>
            <person name="Hoganson G.E."/>
            <person name="Botto L.D."/>
            <person name="Filloux F.M."/>
            <person name="Aledo-Serrano A."/>
            <person name="Gil-Nagel A."/>
            <person name="Tatton-Brown K."/>
            <person name="Verbeek N.E."/>
            <person name="van der Zwaag B."/>
            <person name="Aleck K.A."/>
            <person name="Fazenbaker A.C."/>
            <person name="Balciuniene J."/>
            <person name="Dubbs H.A."/>
            <person name="Marsh E.D."/>
            <person name="Garber K."/>
            <person name="Ek J."/>
            <person name="Duno M."/>
            <person name="Hoei-Hansen C.E."/>
            <person name="Deardorff M.A."/>
            <person name="Raca G."/>
            <person name="Quindipan C."/>
            <person name="van Hirtum-Das M."/>
            <person name="Breckpot J."/>
            <person name="Hammer T.B."/>
            <person name="Moeller R.S."/>
            <person name="Whitney A."/>
            <person name="Douglas A.G.L."/>
            <person name="Kharbanda M."/>
            <person name="Brunetti-Pierri N."/>
            <person name="Morleo M."/>
            <person name="Nigro V."/>
            <person name="May H.J."/>
            <person name="Tao J.X."/>
            <person name="Argilli E."/>
            <person name="Sherr E.H."/>
            <person name="Dobyns W.B."/>
            <person name="Baines R.A."/>
            <person name="Warwicker J."/>
            <person name="Parker J.A."/>
            <person name="Banka S."/>
            <person name="Campeau P.M."/>
            <person name="Escayg A."/>
        </authorList>
    </citation>
    <scope>VARIANTS EPEO3 SER-29; PRO-48; ARG-53; ALA-58; ALA-63; PHE-74; THR-95; PRO-95; VAL-95; ARG-98; ASN-132; LEU-137; PRO-138; ASP-142; THR-147; THR-149; PHE-150 AND PRO-150</scope>
    <scope>CHARACTERIZATION OF VARIANTS EPEO3 SER-29; PRO-48; ALA-63; PHE-74; THR-95; PRO-95; ARG-98; LEU-137; PRO-138; THR-149; PHE-150 AND PRO-150</scope>
    <scope>CHARACTERIZATION OF VARIANTS TRP-48; SER-103 AND ILE-131</scope>
    <scope>MUTAGENESIS OF GLU-139</scope>
</reference>
<reference key="15">
    <citation type="journal article" date="2023" name="J. Hum. Genet.">
        <title>ATP6V0C gene variants were identified in individuals with epilepsy, with or without developmental delay.</title>
        <authorList>
            <person name="Zhao S."/>
            <person name="Zhang X."/>
            <person name="Yang L."/>
            <person name="Wang Y."/>
            <person name="Jia S."/>
            <person name="Li X."/>
            <person name="Wang Z."/>
            <person name="Yang F."/>
            <person name="Liang M."/>
            <person name="Wang X."/>
            <person name="Wang D."/>
        </authorList>
    </citation>
    <scope>VARIANTS EPEO3 99-VAL--SER-102 DEL AND TRP-119</scope>
</reference>
<sequence>MSESKSGPEYASFFAVMGASAAMVFSALGAAYGTAKSGTGIAAMSVMRPEQIMKSIIPVVMAGIIAIYGLVVAVLIANSLNDDISLYKSFLQLGAGLSVGLSGLAAGFAIGIVGDAGVRGTAQQPRLFVGMILILIFAEVLGLYGLIVALILSTK</sequence>
<comment type="function">
    <text evidence="1 7 10">Proton-conducting pore forming subunit of the V0 complex of vacuolar(H+)-ATPase (V-ATPase), a multisubunit enzyme composed of a peripheral complex (V1) that hydrolyzes ATP and a membrane integral complex (V0) that translocates protons (PubMed:33065002, PubMed:36074901). V-ATPase is responsible for acidifying and maintaining the pH of intracellular compartments, and in some cell types, it is targeted to the plasma membrane, where it is responsible for acidifying the extracellular environment (By similarity).</text>
</comment>
<comment type="subunit">
    <text evidence="3 5 6 7">V-ATPase is a heteromultimeric enzyme made up of two complexes: the ATP-hydrolytic V1 complex and the proton translocation V0 complex (PubMed:33065002). The V1 complex consists of three catalytic AB heterodimers that form a heterohexamer, three peripheral stalks each consisting of EG heterodimers, one central rotor including subunits D and F, and the regulatory subunits C and H (PubMed:33065002). The proton translocation complex V0 consists of the proton transport subunit a, a ring of proteolipid subunits c9c'', rotary subunit d, subunits e and f, and the accessory subunits ATP6AP1/Ac45 and ATP6AP2/PRR (PubMed:33065002). Interacts with the V0 complex V-ATPase subunit a4 ATP6V0A4 (By similarity). Interacts with LASS2 (PubMed:11543633). Interacts with RNF182; this interaction leads to ubiquitination and degradation via the proteasome pathway (PubMed:18298843).</text>
</comment>
<comment type="subunit">
    <text evidence="12">(Microbial infection) Interacts with HTLV-1 accessory protein p12I.</text>
</comment>
<comment type="interaction">
    <interactant intactId="EBI-721179">
        <id>P27449</id>
    </interactant>
    <interactant intactId="EBI-13059134">
        <id>Q13520</id>
        <label>AQP6</label>
    </interactant>
    <organismsDiffer>false</organismsDiffer>
    <experiments>3</experiments>
</comment>
<comment type="interaction">
    <interactant intactId="EBI-721179">
        <id>P27449</id>
    </interactant>
    <interactant intactId="EBI-12808270">
        <id>P07307-3</id>
        <label>ASGR2</label>
    </interactant>
    <organismsDiffer>false</organismsDiffer>
    <experiments>3</experiments>
</comment>
<comment type="interaction">
    <interactant intactId="EBI-721179">
        <id>P27449</id>
    </interactant>
    <interactant intactId="EBI-6657396">
        <id>P19397</id>
        <label>CD53</label>
    </interactant>
    <organismsDiffer>false</organismsDiffer>
    <experiments>3</experiments>
</comment>
<comment type="interaction">
    <interactant intactId="EBI-721179">
        <id>P27449</id>
    </interactant>
    <interactant intactId="EBI-2836595">
        <id>Q07108</id>
        <label>CD69</label>
    </interactant>
    <organismsDiffer>false</organismsDiffer>
    <experiments>3</experiments>
</comment>
<comment type="interaction">
    <interactant intactId="EBI-721179">
        <id>P27449</id>
    </interactant>
    <interactant intactId="EBI-7797864">
        <id>P11912</id>
        <label>CD79A</label>
    </interactant>
    <organismsDiffer>false</organismsDiffer>
    <experiments>3</experiments>
</comment>
<comment type="interaction">
    <interactant intactId="EBI-721179">
        <id>P27449</id>
    </interactant>
    <interactant intactId="EBI-1057080">
        <id>Q96G23</id>
        <label>CERS2</label>
    </interactant>
    <organismsDiffer>false</organismsDiffer>
    <experiments>4</experiments>
</comment>
<comment type="interaction">
    <interactant intactId="EBI-721179">
        <id>P27449</id>
    </interactant>
    <interactant intactId="EBI-17710733">
        <id>Q86T13</id>
        <label>CLEC14A</label>
    </interactant>
    <organismsDiffer>false</organismsDiffer>
    <experiments>3</experiments>
</comment>
<comment type="interaction">
    <interactant intactId="EBI-721179">
        <id>P27449</id>
    </interactant>
    <interactant intactId="EBI-11977093">
        <id>Q6ZS10</id>
        <label>CLEC17A</label>
    </interactant>
    <organismsDiffer>false</organismsDiffer>
    <experiments>3</experiments>
</comment>
<comment type="interaction">
    <interactant intactId="EBI-721179">
        <id>P27449</id>
    </interactant>
    <interactant intactId="EBI-11749983">
        <id>Q9UHP7-3</id>
        <label>CLEC2D</label>
    </interactant>
    <organismsDiffer>false</organismsDiffer>
    <experiments>3</experiments>
</comment>
<comment type="interaction">
    <interactant intactId="EBI-721179">
        <id>P27449</id>
    </interactant>
    <interactant intactId="EBI-18013275">
        <id>Q7Z7G2</id>
        <label>CPLX4</label>
    </interactant>
    <organismsDiffer>false</organismsDiffer>
    <experiments>3</experiments>
</comment>
<comment type="interaction">
    <interactant intactId="EBI-721179">
        <id>P27449</id>
    </interactant>
    <interactant intactId="EBI-517508">
        <id>Q9NR28</id>
        <label>DIABLO</label>
    </interactant>
    <organismsDiffer>false</organismsDiffer>
    <experiments>3</experiments>
</comment>
<comment type="interaction">
    <interactant intactId="EBI-721179">
        <id>P27449</id>
    </interactant>
    <interactant intactId="EBI-296550">
        <id>Q96KC8</id>
        <label>DNAJC1</label>
    </interactant>
    <organismsDiffer>false</organismsDiffer>
    <experiments>3</experiments>
</comment>
<comment type="interaction">
    <interactant intactId="EBI-721179">
        <id>P27449</id>
    </interactant>
    <interactant intactId="EBI-529425">
        <id>Q92838</id>
        <label>EDA</label>
    </interactant>
    <organismsDiffer>false</organismsDiffer>
    <experiments>4</experiments>
</comment>
<comment type="interaction">
    <interactant intactId="EBI-721179">
        <id>P27449</id>
    </interactant>
    <interactant intactId="EBI-526033">
        <id>Q9HAV5</id>
        <label>EDA2R</label>
    </interactant>
    <organismsDiffer>false</organismsDiffer>
    <experiments>3</experiments>
</comment>
<comment type="interaction">
    <interactant intactId="EBI-721179">
        <id>P27449</id>
    </interactant>
    <interactant intactId="EBI-781551">
        <id>Q9Y282</id>
        <label>ERGIC3</label>
    </interactant>
    <organismsDiffer>false</organismsDiffer>
    <experiments>3</experiments>
</comment>
<comment type="interaction">
    <interactant intactId="EBI-721179">
        <id>P27449</id>
    </interactant>
    <interactant intactId="EBI-711389">
        <id>P84090</id>
        <label>ERH</label>
    </interactant>
    <organismsDiffer>false</organismsDiffer>
    <experiments>3</experiments>
</comment>
<comment type="interaction">
    <interactant intactId="EBI-721179">
        <id>P27449</id>
    </interactant>
    <interactant intactId="EBI-2870359">
        <id>P22794</id>
        <label>EVI2A</label>
    </interactant>
    <organismsDiffer>false</organismsDiffer>
    <experiments>3</experiments>
</comment>
<comment type="interaction">
    <interactant intactId="EBI-721179">
        <id>P27449</id>
    </interactant>
    <interactant intactId="EBI-18938272">
        <id>Q96KR6</id>
        <label>FAM210B</label>
    </interactant>
    <organismsDiffer>false</organismsDiffer>
    <experiments>3</experiments>
</comment>
<comment type="interaction">
    <interactant intactId="EBI-721179">
        <id>P27449</id>
    </interactant>
    <interactant intactId="EBI-2833872">
        <id>O15552</id>
        <label>FFAR2</label>
    </interactant>
    <organismsDiffer>false</organismsDiffer>
    <experiments>3</experiments>
</comment>
<comment type="interaction">
    <interactant intactId="EBI-721179">
        <id>P27449</id>
    </interactant>
    <interactant intactId="EBI-12142257">
        <id>Q8TBE3</id>
        <label>FNDC9</label>
    </interactant>
    <organismsDiffer>false</organismsDiffer>
    <experiments>3</experiments>
</comment>
<comment type="interaction">
    <interactant intactId="EBI-721179">
        <id>P27449</id>
    </interactant>
    <interactant intactId="EBI-13345167">
        <id>Q8TDT2</id>
        <label>GPR152</label>
    </interactant>
    <organismsDiffer>false</organismsDiffer>
    <experiments>3</experiments>
</comment>
<comment type="interaction">
    <interactant intactId="EBI-721179">
        <id>P27449</id>
    </interactant>
    <interactant intactId="EBI-10178951">
        <id>O00155</id>
        <label>GPR25</label>
    </interactant>
    <organismsDiffer>false</organismsDiffer>
    <experiments>3</experiments>
</comment>
<comment type="interaction">
    <interactant intactId="EBI-721179">
        <id>P27449</id>
    </interactant>
    <interactant intactId="EBI-18076404">
        <id>O15529</id>
        <label>GPR42</label>
    </interactant>
    <organismsDiffer>false</organismsDiffer>
    <experiments>3</experiments>
</comment>
<comment type="interaction">
    <interactant intactId="EBI-721179">
        <id>P27449</id>
    </interactant>
    <interactant intactId="EBI-18053395">
        <id>Q7Z5P4</id>
        <label>HSD17B13</label>
    </interactant>
    <organismsDiffer>false</organismsDiffer>
    <experiments>3</experiments>
</comment>
<comment type="interaction">
    <interactant intactId="EBI-721179">
        <id>P27449</id>
    </interactant>
    <interactant intactId="EBI-1031656">
        <id>Q13651</id>
        <label>IL10RA</label>
    </interactant>
    <organismsDiffer>false</organismsDiffer>
    <experiments>3</experiments>
</comment>
<comment type="interaction">
    <interactant intactId="EBI-721179">
        <id>P27449</id>
    </interactant>
    <interactant intactId="EBI-80490">
        <id>P16871</id>
        <label>IL7R</label>
    </interactant>
    <organismsDiffer>false</organismsDiffer>
    <experiments>3</experiments>
</comment>
<comment type="interaction">
    <interactant intactId="EBI-721179">
        <id>P27449</id>
    </interactant>
    <interactant intactId="EBI-2432309">
        <id>Q92876</id>
        <label>KLK6</label>
    </interactant>
    <organismsDiffer>false</organismsDiffer>
    <experiments>3</experiments>
</comment>
<comment type="interaction">
    <interactant intactId="EBI-721179">
        <id>P27449</id>
    </interactant>
    <interactant intactId="EBI-9018187">
        <id>P26715</id>
        <label>KLRC1</label>
    </interactant>
    <organismsDiffer>false</organismsDiffer>
    <experiments>3</experiments>
</comment>
<comment type="interaction">
    <interactant intactId="EBI-721179">
        <id>P27449</id>
    </interactant>
    <interactant intactId="EBI-11304917">
        <id>Q8N386</id>
        <label>LRRC25</label>
    </interactant>
    <organismsDiffer>false</organismsDiffer>
    <experiments>3</experiments>
</comment>
<comment type="interaction">
    <interactant intactId="EBI-721179">
        <id>P27449</id>
    </interactant>
    <interactant intactId="EBI-2816356">
        <id>Q8IX19</id>
        <label>MCEMP1</label>
    </interactant>
    <organismsDiffer>false</organismsDiffer>
    <experiments>5</experiments>
</comment>
<comment type="interaction">
    <interactant intactId="EBI-721179">
        <id>P27449</id>
    </interactant>
    <interactant intactId="EBI-1776976">
        <id>P21757</id>
        <label>MSR1</label>
    </interactant>
    <organismsDiffer>false</organismsDiffer>
    <experiments>6</experiments>
</comment>
<comment type="interaction">
    <interactant intactId="EBI-721179">
        <id>P27449</id>
    </interactant>
    <interactant intactId="EBI-10252783">
        <id>Q6P499</id>
        <label>NIPAL3</label>
    </interactant>
    <organismsDiffer>false</organismsDiffer>
    <experiments>3</experiments>
</comment>
<comment type="interaction">
    <interactant intactId="EBI-721179">
        <id>P27449</id>
    </interactant>
    <interactant intactId="EBI-12807478">
        <id>P35372-10</id>
        <label>OPRM1</label>
    </interactant>
    <organismsDiffer>false</organismsDiffer>
    <experiments>3</experiments>
</comment>
<comment type="interaction">
    <interactant intactId="EBI-721179">
        <id>P27449</id>
    </interactant>
    <interactant intactId="EBI-16427978">
        <id>Q9BQ51</id>
        <label>PDCD1LG2</label>
    </interactant>
    <organismsDiffer>false</organismsDiffer>
    <experiments>3</experiments>
</comment>
<comment type="interaction">
    <interactant intactId="EBI-721179">
        <id>P27449</id>
    </interactant>
    <interactant intactId="EBI-12810028">
        <id>Q6UXB8</id>
        <label>PI16</label>
    </interactant>
    <organismsDiffer>false</organismsDiffer>
    <experiments>3</experiments>
</comment>
<comment type="interaction">
    <interactant intactId="EBI-721179">
        <id>P27449</id>
    </interactant>
    <interactant intactId="EBI-348380">
        <id>P25788</id>
        <label>PSMA3</label>
    </interactant>
    <organismsDiffer>false</organismsDiffer>
    <experiments>3</experiments>
</comment>
<comment type="interaction">
    <interactant intactId="EBI-721179">
        <id>P27449</id>
    </interactant>
    <interactant intactId="EBI-7545592">
        <id>Q9H6H4</id>
        <label>REEP4</label>
    </interactant>
    <organismsDiffer>false</organismsDiffer>
    <experiments>3</experiments>
</comment>
<comment type="interaction">
    <interactant intactId="EBI-721179">
        <id>P27449</id>
    </interactant>
    <interactant intactId="EBI-10192441">
        <id>Q86VR2</id>
        <label>RETREG3</label>
    </interactant>
    <organismsDiffer>false</organismsDiffer>
    <experiments>4</experiments>
</comment>
<comment type="interaction">
    <interactant intactId="EBI-721179">
        <id>P27449</id>
    </interactant>
    <interactant intactId="EBI-17247926">
        <id>Q9NY72</id>
        <label>SCN3B</label>
    </interactant>
    <organismsDiffer>false</organismsDiffer>
    <experiments>3</experiments>
</comment>
<comment type="interaction">
    <interactant intactId="EBI-721179">
        <id>P27449</id>
    </interactant>
    <interactant intactId="EBI-13389236">
        <id>Q7Z769</id>
        <label>SLC35E3</label>
    </interactant>
    <organismsDiffer>false</organismsDiffer>
    <experiments>3</experiments>
</comment>
<comment type="interaction">
    <interactant intactId="EBI-721179">
        <id>P27449</id>
    </interactant>
    <interactant intactId="EBI-4289564">
        <id>P30825</id>
        <label>SLC7A1</label>
    </interactant>
    <organismsDiffer>false</organismsDiffer>
    <experiments>3</experiments>
</comment>
<comment type="interaction">
    <interactant intactId="EBI-721179">
        <id>P27449</id>
    </interactant>
    <interactant intactId="EBI-741850">
        <id>Q9BZL3</id>
        <label>SMIM3</label>
    </interactant>
    <organismsDiffer>false</organismsDiffer>
    <experiments>6</experiments>
</comment>
<comment type="interaction">
    <interactant intactId="EBI-721179">
        <id>P27449</id>
    </interactant>
    <interactant intactId="EBI-17498703">
        <id>Q9HBV2</id>
        <label>SPACA1</label>
    </interactant>
    <organismsDiffer>false</organismsDiffer>
    <experiments>3</experiments>
</comment>
<comment type="interaction">
    <interactant intactId="EBI-721179">
        <id>P27449</id>
    </interactant>
    <interactant intactId="EBI-17280858">
        <id>Q8WWF3</id>
        <label>SSMEM1</label>
    </interactant>
    <organismsDiffer>false</organismsDiffer>
    <experiments>3</experiments>
</comment>
<comment type="interaction">
    <interactant intactId="EBI-721179">
        <id>P27449</id>
    </interactant>
    <interactant intactId="EBI-1211440">
        <id>P27105</id>
        <label>STOM</label>
    </interactant>
    <organismsDiffer>false</organismsDiffer>
    <experiments>3</experiments>
</comment>
<comment type="interaction">
    <interactant intactId="EBI-721179">
        <id>P27449</id>
    </interactant>
    <interactant intactId="EBI-18194029">
        <id>Q96L08</id>
        <label>SUSD3</label>
    </interactant>
    <organismsDiffer>false</organismsDiffer>
    <experiments>3</experiments>
</comment>
<comment type="interaction">
    <interactant intactId="EBI-721179">
        <id>P27449</id>
    </interactant>
    <interactant intactId="EBI-7238458">
        <id>Q8IV31</id>
        <label>TMEM139</label>
    </interactant>
    <organismsDiffer>false</organismsDiffer>
    <experiments>3</experiments>
</comment>
<comment type="interaction">
    <interactant intactId="EBI-721179">
        <id>P27449</id>
    </interactant>
    <interactant intactId="EBI-723976">
        <id>Q9P0T7</id>
        <label>TMEM9</label>
    </interactant>
    <organismsDiffer>false</organismsDiffer>
    <experiments>3</experiments>
</comment>
<comment type="interaction">
    <interactant intactId="EBI-721179">
        <id>P27449</id>
    </interactant>
    <interactant intactId="EBI-744988">
        <id>Q9H7M9</id>
        <label>VSIR</label>
    </interactant>
    <organismsDiffer>false</organismsDiffer>
    <experiments>3</experiments>
</comment>
<comment type="interaction">
    <interactant intactId="EBI-721179">
        <id>P27449</id>
    </interactant>
    <interactant intactId="EBI-748373">
        <id>Q6PEW1</id>
        <label>ZCCHC12</label>
    </interactant>
    <organismsDiffer>false</organismsDiffer>
    <experiments>3</experiments>
</comment>
<comment type="interaction">
    <interactant intactId="EBI-721179">
        <id>P27449</id>
    </interactant>
    <interactant intactId="EBI-7015490">
        <id>P0CK45</id>
        <label>E5</label>
    </interactant>
    <organismsDiffer>true</organismsDiffer>
    <experiments>2</experiments>
</comment>
<comment type="subcellular location">
    <subcellularLocation>
        <location evidence="2">Cytoplasmic vesicle</location>
        <location evidence="2">Clathrin-coated vesicle membrane</location>
        <topology evidence="4">Multi-pass membrane protein</topology>
    </subcellularLocation>
    <subcellularLocation>
        <location evidence="2">Cytoplasmic vesicle</location>
        <location evidence="2">Secretory vesicle</location>
        <location evidence="2">Synaptic vesicle membrane</location>
        <topology evidence="4">Multi-pass membrane protein</topology>
    </subcellularLocation>
</comment>
<comment type="PTM">
    <text evidence="6">Ubiquitinated by RNF182, leading to its degradation via the ubiquitin-proteasome pathway.</text>
</comment>
<comment type="disease" evidence="8 9 10 11">
    <disease id="DI-06741">
        <name>Epilepsy, early-onset, 3, with or without developmental delay</name>
        <acronym>EPEO3</acronym>
        <description>An autosomal dominant neurologic disorder characterized by various types of seizures with onset in the first months or years of life. Many patients present with febrile seizures and later develop afebrile seizures. Some affected individuals have global developmental delay or regression, impaired intellectual development, poor or absent speech, and motor delay. Additional variable features include hypotonia, gait ataxia, behavioral abnormalities, and anomalies on brain imaging.</description>
        <dbReference type="MIM" id="620465"/>
    </disease>
    <text>The disease is caused by variants affecting the gene represented in this entry.</text>
</comment>
<comment type="similarity">
    <text evidence="13">Belongs to the V-ATPase proteolipid subunit family.</text>
</comment>
<keyword id="KW-0002">3D-structure</keyword>
<keyword id="KW-0968">Cytoplasmic vesicle</keyword>
<keyword id="KW-0225">Disease variant</keyword>
<keyword id="KW-0887">Epilepsy</keyword>
<keyword id="KW-0945">Host-virus interaction</keyword>
<keyword id="KW-0375">Hydrogen ion transport</keyword>
<keyword id="KW-0406">Ion transport</keyword>
<keyword id="KW-0472">Membrane</keyword>
<keyword id="KW-1267">Proteomics identification</keyword>
<keyword id="KW-1185">Reference proteome</keyword>
<keyword id="KW-0770">Synapse</keyword>
<keyword id="KW-0812">Transmembrane</keyword>
<keyword id="KW-1133">Transmembrane helix</keyword>
<keyword id="KW-0813">Transport</keyword>
<keyword id="KW-0832">Ubl conjugation</keyword>
<protein>
    <recommendedName>
        <fullName evidence="13">V-type proton ATPase 16 kDa proteolipid subunit c</fullName>
        <shortName evidence="13">V-ATPase 16 kDa proteolipid subunit c</shortName>
    </recommendedName>
    <alternativeName>
        <fullName evidence="13">Vacuolar proton pump 16 kDa proteolipid subunit c</fullName>
    </alternativeName>
</protein>
<name>VATL_HUMAN</name>
<dbReference type="EMBL" id="M62762">
    <property type="protein sequence ID" value="AAA60039.1"/>
    <property type="molecule type" value="mRNA"/>
</dbReference>
<dbReference type="EMBL" id="CR541930">
    <property type="protein sequence ID" value="CAG46728.1"/>
    <property type="molecule type" value="mRNA"/>
</dbReference>
<dbReference type="EMBL" id="CR541951">
    <property type="protein sequence ID" value="CAG46749.1"/>
    <property type="molecule type" value="mRNA"/>
</dbReference>
<dbReference type="EMBL" id="BT007155">
    <property type="protein sequence ID" value="AAP35819.1"/>
    <property type="molecule type" value="mRNA"/>
</dbReference>
<dbReference type="EMBL" id="BC004537">
    <property type="protein sequence ID" value="AAH04537.1"/>
    <property type="molecule type" value="mRNA"/>
</dbReference>
<dbReference type="EMBL" id="BC007389">
    <property type="protein sequence ID" value="AAH07389.1"/>
    <property type="molecule type" value="mRNA"/>
</dbReference>
<dbReference type="EMBL" id="BC007759">
    <property type="protein sequence ID" value="AAH07759.1"/>
    <property type="molecule type" value="mRNA"/>
</dbReference>
<dbReference type="EMBL" id="BC009290">
    <property type="protein sequence ID" value="AAH09290.1"/>
    <property type="molecule type" value="mRNA"/>
</dbReference>
<dbReference type="CCDS" id="CCDS10470.1"/>
<dbReference type="PIR" id="A39367">
    <property type="entry name" value="A39367"/>
</dbReference>
<dbReference type="RefSeq" id="NP_001185498.1">
    <property type="nucleotide sequence ID" value="NM_001198569.2"/>
</dbReference>
<dbReference type="RefSeq" id="NP_001685.1">
    <property type="nucleotide sequence ID" value="NM_001694.4"/>
</dbReference>
<dbReference type="PDB" id="6WLW">
    <property type="method" value="EM"/>
    <property type="resolution" value="3.00 A"/>
    <property type="chains" value="1/2/3/4/5/6/7/8/9=1-155"/>
</dbReference>
<dbReference type="PDB" id="6WM2">
    <property type="method" value="EM"/>
    <property type="resolution" value="3.10 A"/>
    <property type="chains" value="1/2/3/4/5/6/7/8/9=1-155"/>
</dbReference>
<dbReference type="PDB" id="6WM3">
    <property type="method" value="EM"/>
    <property type="resolution" value="3.40 A"/>
    <property type="chains" value="1/2/3/4/5/6/7/8/9=1-155"/>
</dbReference>
<dbReference type="PDB" id="6WM4">
    <property type="method" value="EM"/>
    <property type="resolution" value="3.60 A"/>
    <property type="chains" value="1/2/3/4/5/6/7/8/9=1-155"/>
</dbReference>
<dbReference type="PDB" id="7U4T">
    <property type="method" value="EM"/>
    <property type="resolution" value="3.60 A"/>
    <property type="chains" value="1/2/3/4/5/6/7/8/9=1-155"/>
</dbReference>
<dbReference type="PDB" id="7UNF">
    <property type="method" value="EM"/>
    <property type="resolution" value="4.08 A"/>
    <property type="chains" value="0/2/3/4/5/6/7/8/9=1-155"/>
</dbReference>
<dbReference type="PDBsum" id="6WLW"/>
<dbReference type="PDBsum" id="6WM2"/>
<dbReference type="PDBsum" id="6WM3"/>
<dbReference type="PDBsum" id="6WM4"/>
<dbReference type="PDBsum" id="7U4T"/>
<dbReference type="PDBsum" id="7UNF"/>
<dbReference type="EMDB" id="EMD-21844"/>
<dbReference type="EMDB" id="EMD-21847"/>
<dbReference type="EMDB" id="EMD-21848"/>
<dbReference type="EMDB" id="EMD-21849"/>
<dbReference type="EMDB" id="EMD-26334"/>
<dbReference type="EMDB" id="EMD-26623"/>
<dbReference type="SMR" id="P27449"/>
<dbReference type="BioGRID" id="107010">
    <property type="interactions" value="151"/>
</dbReference>
<dbReference type="ComplexPortal" id="CPX-2470">
    <property type="entry name" value="Vacuolar proton translocating ATPase complex, ATP6V0A1 variant"/>
</dbReference>
<dbReference type="ComplexPortal" id="CPX-6904">
    <property type="entry name" value="Vacuolar proton translocating ATPase complex, ATP6V0A2 variant"/>
</dbReference>
<dbReference type="ComplexPortal" id="CPX-6905">
    <property type="entry name" value="Vacuolar proton translocating ATPase complex, ATP6V0A3 variant"/>
</dbReference>
<dbReference type="ComplexPortal" id="CPX-6912">
    <property type="entry name" value="Vacuolar proton translocating ATPase complex, ATP6V0A4 variant"/>
</dbReference>
<dbReference type="CORUM" id="P27449"/>
<dbReference type="FunCoup" id="P27449">
    <property type="interactions" value="1503"/>
</dbReference>
<dbReference type="IntAct" id="P27449">
    <property type="interactions" value="127"/>
</dbReference>
<dbReference type="MINT" id="P27449"/>
<dbReference type="STRING" id="9606.ENSP00000329757"/>
<dbReference type="DrugBank" id="DB01133">
    <property type="generic name" value="Tiludronic acid"/>
</dbReference>
<dbReference type="GlyGen" id="P27449">
    <property type="glycosylation" value="3 sites, 1 O-linked glycan (3 sites)"/>
</dbReference>
<dbReference type="iPTMnet" id="P27449"/>
<dbReference type="PhosphoSitePlus" id="P27449"/>
<dbReference type="BioMuta" id="ATP6V0C"/>
<dbReference type="DMDM" id="137479"/>
<dbReference type="jPOST" id="P27449"/>
<dbReference type="MassIVE" id="P27449"/>
<dbReference type="PaxDb" id="9606-ENSP00000329757"/>
<dbReference type="PeptideAtlas" id="P27449"/>
<dbReference type="ProteomicsDB" id="54393"/>
<dbReference type="Pumba" id="P27449"/>
<dbReference type="TopDownProteomics" id="P27449"/>
<dbReference type="Antibodypedia" id="23806">
    <property type="antibodies" value="84 antibodies from 19 providers"/>
</dbReference>
<dbReference type="DNASU" id="527"/>
<dbReference type="Ensembl" id="ENST00000330398.9">
    <property type="protein sequence ID" value="ENSP00000329757.4"/>
    <property type="gene ID" value="ENSG00000185883.12"/>
</dbReference>
<dbReference type="GeneID" id="527"/>
<dbReference type="KEGG" id="hsa:527"/>
<dbReference type="MANE-Select" id="ENST00000330398.9">
    <property type="protein sequence ID" value="ENSP00000329757.4"/>
    <property type="RefSeq nucleotide sequence ID" value="NM_001694.4"/>
    <property type="RefSeq protein sequence ID" value="NP_001685.1"/>
</dbReference>
<dbReference type="UCSC" id="uc002cqn.4">
    <property type="organism name" value="human"/>
</dbReference>
<dbReference type="AGR" id="HGNC:855"/>
<dbReference type="CTD" id="527"/>
<dbReference type="DisGeNET" id="527"/>
<dbReference type="GeneCards" id="ATP6V0C"/>
<dbReference type="HGNC" id="HGNC:855">
    <property type="gene designation" value="ATP6V0C"/>
</dbReference>
<dbReference type="HPA" id="ENSG00000185883">
    <property type="expression patterns" value="Low tissue specificity"/>
</dbReference>
<dbReference type="MalaCards" id="ATP6V0C"/>
<dbReference type="MIM" id="108745">
    <property type="type" value="gene"/>
</dbReference>
<dbReference type="MIM" id="620465">
    <property type="type" value="phenotype"/>
</dbReference>
<dbReference type="neXtProt" id="NX_P27449"/>
<dbReference type="OpenTargets" id="ENSG00000185883"/>
<dbReference type="PharmGKB" id="PA25149"/>
<dbReference type="VEuPathDB" id="HostDB:ENSG00000185883"/>
<dbReference type="eggNOG" id="KOG0232">
    <property type="taxonomic scope" value="Eukaryota"/>
</dbReference>
<dbReference type="GeneTree" id="ENSGT00550000074873"/>
<dbReference type="HOGENOM" id="CLU_085752_1_2_1"/>
<dbReference type="InParanoid" id="P27449"/>
<dbReference type="OMA" id="MGVMKPD"/>
<dbReference type="OrthoDB" id="1744869at2759"/>
<dbReference type="PAN-GO" id="P27449">
    <property type="GO annotations" value="1 GO annotation based on evolutionary models"/>
</dbReference>
<dbReference type="PhylomeDB" id="P27449"/>
<dbReference type="TreeFam" id="TF300025"/>
<dbReference type="BioCyc" id="MetaCyc:MONOMER66-34368"/>
<dbReference type="PathwayCommons" id="P27449"/>
<dbReference type="Reactome" id="R-HSA-1222556">
    <property type="pathway name" value="ROS and RNS production in phagocytes"/>
</dbReference>
<dbReference type="Reactome" id="R-HSA-6798695">
    <property type="pathway name" value="Neutrophil degranulation"/>
</dbReference>
<dbReference type="Reactome" id="R-HSA-77387">
    <property type="pathway name" value="Insulin receptor recycling"/>
</dbReference>
<dbReference type="Reactome" id="R-HSA-917977">
    <property type="pathway name" value="Transferrin endocytosis and recycling"/>
</dbReference>
<dbReference type="Reactome" id="R-HSA-9639288">
    <property type="pathway name" value="Amino acids regulate mTORC1"/>
</dbReference>
<dbReference type="Reactome" id="R-HSA-983712">
    <property type="pathway name" value="Ion channel transport"/>
</dbReference>
<dbReference type="Reactome" id="R-HSA-9857377">
    <property type="pathway name" value="Regulation of MITF-M-dependent genes involved in lysosome biogenesis and autophagy"/>
</dbReference>
<dbReference type="SignaLink" id="P27449"/>
<dbReference type="SIGNOR" id="P27449"/>
<dbReference type="BioGRID-ORCS" id="527">
    <property type="hits" value="866 hits in 1175 CRISPR screens"/>
</dbReference>
<dbReference type="ChiTaRS" id="ATP6V0C">
    <property type="organism name" value="human"/>
</dbReference>
<dbReference type="GeneWiki" id="ATP6V0C"/>
<dbReference type="GenomeRNAi" id="527"/>
<dbReference type="Pharos" id="P27449">
    <property type="development level" value="Tbio"/>
</dbReference>
<dbReference type="PRO" id="PR:P27449"/>
<dbReference type="Proteomes" id="UP000005640">
    <property type="component" value="Chromosome 16"/>
</dbReference>
<dbReference type="RNAct" id="P27449">
    <property type="molecule type" value="protein"/>
</dbReference>
<dbReference type="Bgee" id="ENSG00000185883">
    <property type="expression patterns" value="Expressed in superior frontal gyrus and 95 other cell types or tissues"/>
</dbReference>
<dbReference type="ExpressionAtlas" id="P27449">
    <property type="expression patterns" value="baseline and differential"/>
</dbReference>
<dbReference type="GO" id="GO:0035577">
    <property type="term" value="C:azurophil granule membrane"/>
    <property type="evidence" value="ECO:0000304"/>
    <property type="project" value="Reactome"/>
</dbReference>
<dbReference type="GO" id="GO:0030665">
    <property type="term" value="C:clathrin-coated vesicle membrane"/>
    <property type="evidence" value="ECO:0007669"/>
    <property type="project" value="UniProtKB-SubCell"/>
</dbReference>
<dbReference type="GO" id="GO:0010008">
    <property type="term" value="C:endosome membrane"/>
    <property type="evidence" value="ECO:0000304"/>
    <property type="project" value="Reactome"/>
</dbReference>
<dbReference type="GO" id="GO:0070062">
    <property type="term" value="C:extracellular exosome"/>
    <property type="evidence" value="ECO:0007005"/>
    <property type="project" value="UniProtKB"/>
</dbReference>
<dbReference type="GO" id="GO:0101003">
    <property type="term" value="C:ficolin-1-rich granule membrane"/>
    <property type="evidence" value="ECO:0000304"/>
    <property type="project" value="Reactome"/>
</dbReference>
<dbReference type="GO" id="GO:0005925">
    <property type="term" value="C:focal adhesion"/>
    <property type="evidence" value="ECO:0007005"/>
    <property type="project" value="UniProtKB"/>
</dbReference>
<dbReference type="GO" id="GO:0000139">
    <property type="term" value="C:Golgi membrane"/>
    <property type="evidence" value="ECO:0000303"/>
    <property type="project" value="ComplexPortal"/>
</dbReference>
<dbReference type="GO" id="GO:0005765">
    <property type="term" value="C:lysosomal membrane"/>
    <property type="evidence" value="ECO:0007005"/>
    <property type="project" value="UniProtKB"/>
</dbReference>
<dbReference type="GO" id="GO:0016020">
    <property type="term" value="C:membrane"/>
    <property type="evidence" value="ECO:0000314"/>
    <property type="project" value="ComplexPortal"/>
</dbReference>
<dbReference type="GO" id="GO:0030670">
    <property type="term" value="C:phagocytic vesicle membrane"/>
    <property type="evidence" value="ECO:0000304"/>
    <property type="project" value="Reactome"/>
</dbReference>
<dbReference type="GO" id="GO:0005886">
    <property type="term" value="C:plasma membrane"/>
    <property type="evidence" value="ECO:0000304"/>
    <property type="project" value="Reactome"/>
</dbReference>
<dbReference type="GO" id="GO:0033176">
    <property type="term" value="C:proton-transporting V-type ATPase complex"/>
    <property type="evidence" value="ECO:0000303"/>
    <property type="project" value="ComplexPortal"/>
</dbReference>
<dbReference type="GO" id="GO:0030672">
    <property type="term" value="C:synaptic vesicle membrane"/>
    <property type="evidence" value="ECO:0007669"/>
    <property type="project" value="UniProtKB-SubCell"/>
</dbReference>
<dbReference type="GO" id="GO:0070821">
    <property type="term" value="C:tertiary granule membrane"/>
    <property type="evidence" value="ECO:0000304"/>
    <property type="project" value="Reactome"/>
</dbReference>
<dbReference type="GO" id="GO:0000220">
    <property type="term" value="C:vacuolar proton-transporting V-type ATPase, V0 domain"/>
    <property type="evidence" value="ECO:0000250"/>
    <property type="project" value="UniProtKB"/>
</dbReference>
<dbReference type="GO" id="GO:0046933">
    <property type="term" value="F:proton-transporting ATP synthase activity, rotational mechanism"/>
    <property type="evidence" value="ECO:0000304"/>
    <property type="project" value="UniProtKB"/>
</dbReference>
<dbReference type="GO" id="GO:0046961">
    <property type="term" value="F:proton-transporting ATPase activity, rotational mechanism"/>
    <property type="evidence" value="ECO:0000304"/>
    <property type="project" value="ProtInc"/>
</dbReference>
<dbReference type="GO" id="GO:0031625">
    <property type="term" value="F:ubiquitin protein ligase binding"/>
    <property type="evidence" value="ECO:0000353"/>
    <property type="project" value="UniProtKB"/>
</dbReference>
<dbReference type="GO" id="GO:0048388">
    <property type="term" value="P:endosomal lumen acidification"/>
    <property type="evidence" value="ECO:0000303"/>
    <property type="project" value="ComplexPortal"/>
</dbReference>
<dbReference type="GO" id="GO:0061795">
    <property type="term" value="P:Golgi lumen acidification"/>
    <property type="evidence" value="ECO:0000303"/>
    <property type="project" value="ComplexPortal"/>
</dbReference>
<dbReference type="GO" id="GO:0051452">
    <property type="term" value="P:intracellular pH reduction"/>
    <property type="evidence" value="ECO:0000303"/>
    <property type="project" value="ComplexPortal"/>
</dbReference>
<dbReference type="GO" id="GO:0007042">
    <property type="term" value="P:lysosomal lumen acidification"/>
    <property type="evidence" value="ECO:0000303"/>
    <property type="project" value="ComplexPortal"/>
</dbReference>
<dbReference type="GO" id="GO:0030177">
    <property type="term" value="P:positive regulation of Wnt signaling pathway"/>
    <property type="evidence" value="ECO:0000315"/>
    <property type="project" value="UniProtKB"/>
</dbReference>
<dbReference type="GO" id="GO:1902600">
    <property type="term" value="P:proton transmembrane transport"/>
    <property type="evidence" value="ECO:0000304"/>
    <property type="project" value="ProtInc"/>
</dbReference>
<dbReference type="GO" id="GO:0016241">
    <property type="term" value="P:regulation of macroautophagy"/>
    <property type="evidence" value="ECO:0000303"/>
    <property type="project" value="ParkinsonsUK-UCL"/>
</dbReference>
<dbReference type="GO" id="GO:0097401">
    <property type="term" value="P:synaptic vesicle lumen acidification"/>
    <property type="evidence" value="ECO:0007669"/>
    <property type="project" value="Ensembl"/>
</dbReference>
<dbReference type="GO" id="GO:0007035">
    <property type="term" value="P:vacuolar acidification"/>
    <property type="evidence" value="ECO:0000303"/>
    <property type="project" value="ComplexPortal"/>
</dbReference>
<dbReference type="CDD" id="cd18175">
    <property type="entry name" value="ATP-synt_Vo_c_ATP6C_rpt1"/>
    <property type="match status" value="1"/>
</dbReference>
<dbReference type="CDD" id="cd18176">
    <property type="entry name" value="ATP-synt_Vo_c_ATP6C_rpt2"/>
    <property type="match status" value="1"/>
</dbReference>
<dbReference type="FunFam" id="1.20.120.610:FF:000001">
    <property type="entry name" value="V-type proton ATPase proteolipid subunit"/>
    <property type="match status" value="1"/>
</dbReference>
<dbReference type="Gene3D" id="1.20.120.610">
    <property type="entry name" value="lithium bound rotor ring of v- atpase"/>
    <property type="match status" value="1"/>
</dbReference>
<dbReference type="InterPro" id="IPR002379">
    <property type="entry name" value="ATPase_proteolipid_c-like_dom"/>
</dbReference>
<dbReference type="InterPro" id="IPR000245">
    <property type="entry name" value="ATPase_proteolipid_csu"/>
</dbReference>
<dbReference type="InterPro" id="IPR011555">
    <property type="entry name" value="ATPase_proteolipid_su_C_euk"/>
</dbReference>
<dbReference type="InterPro" id="IPR035921">
    <property type="entry name" value="F/V-ATP_Csub_sf"/>
</dbReference>
<dbReference type="NCBIfam" id="TIGR01100">
    <property type="entry name" value="V_ATP_synt_C"/>
    <property type="match status" value="1"/>
</dbReference>
<dbReference type="PANTHER" id="PTHR10263">
    <property type="entry name" value="V-TYPE PROTON ATPASE PROTEOLIPID SUBUNIT"/>
    <property type="match status" value="1"/>
</dbReference>
<dbReference type="Pfam" id="PF00137">
    <property type="entry name" value="ATP-synt_C"/>
    <property type="match status" value="2"/>
</dbReference>
<dbReference type="PRINTS" id="PR00122">
    <property type="entry name" value="VACATPASE"/>
</dbReference>
<dbReference type="SUPFAM" id="SSF81333">
    <property type="entry name" value="F1F0 ATP synthase subunit C"/>
    <property type="match status" value="2"/>
</dbReference>